<proteinExistence type="inferred from homology"/>
<feature type="chain" id="PRO_0000092801" description="Phosphate import ATP-binding protein PstB">
    <location>
        <begin position="1"/>
        <end position="257"/>
    </location>
</feature>
<feature type="domain" description="ABC transporter" evidence="1">
    <location>
        <begin position="11"/>
        <end position="252"/>
    </location>
</feature>
<feature type="binding site" evidence="1">
    <location>
        <begin position="43"/>
        <end position="50"/>
    </location>
    <ligand>
        <name>ATP</name>
        <dbReference type="ChEBI" id="CHEBI:30616"/>
    </ligand>
</feature>
<organism>
    <name type="scientific">Chromobacterium violaceum (strain ATCC 12472 / DSM 30191 / JCM 1249 / CCUG 213 / NBRC 12614 / NCIMB 9131 / NCTC 9757 / MK)</name>
    <dbReference type="NCBI Taxonomy" id="243365"/>
    <lineage>
        <taxon>Bacteria</taxon>
        <taxon>Pseudomonadati</taxon>
        <taxon>Pseudomonadota</taxon>
        <taxon>Betaproteobacteria</taxon>
        <taxon>Neisseriales</taxon>
        <taxon>Chromobacteriaceae</taxon>
        <taxon>Chromobacterium</taxon>
    </lineage>
</organism>
<sequence length="257" mass="28845">MTTMTSTASKLEVRDLNFFYGNFHALKGIQLEIAPRKVTAFIGPSGCGKSTLLRTFNRMYELYPGLRAEGEIMLDGQNILGRDIDVNLLRAKVGMVFQKPTPFPMSIYDNITFGVKLYEKLSKGEMEDRVEWALRKAALWDEVKDKLKQSGNSLSGGQQQRLCIARAVASKPEVLLLDEPTSALDPISTAHIEELIHELKEDYTIAIVTHNMQQAARVSDYTAYMYLGELVEFGNTDTIFTTPQKKATEDYITGKFG</sequence>
<comment type="function">
    <text evidence="1">Part of the ABC transporter complex PstSACB involved in phosphate import. Responsible for energy coupling to the transport system.</text>
</comment>
<comment type="catalytic activity">
    <reaction evidence="1">
        <text>phosphate(out) + ATP + H2O = ADP + 2 phosphate(in) + H(+)</text>
        <dbReference type="Rhea" id="RHEA:24440"/>
        <dbReference type="ChEBI" id="CHEBI:15377"/>
        <dbReference type="ChEBI" id="CHEBI:15378"/>
        <dbReference type="ChEBI" id="CHEBI:30616"/>
        <dbReference type="ChEBI" id="CHEBI:43474"/>
        <dbReference type="ChEBI" id="CHEBI:456216"/>
        <dbReference type="EC" id="7.3.2.1"/>
    </reaction>
</comment>
<comment type="subunit">
    <text evidence="1">The complex is composed of two ATP-binding proteins (PstB), two transmembrane proteins (PstC and PstA) and a solute-binding protein (PstS).</text>
</comment>
<comment type="subcellular location">
    <subcellularLocation>
        <location evidence="1">Cell inner membrane</location>
        <topology evidence="1">Peripheral membrane protein</topology>
    </subcellularLocation>
</comment>
<comment type="similarity">
    <text evidence="1">Belongs to the ABC transporter superfamily. Phosphate importer (TC 3.A.1.7) family.</text>
</comment>
<protein>
    <recommendedName>
        <fullName evidence="1">Phosphate import ATP-binding protein PstB</fullName>
        <ecNumber evidence="1">7.3.2.1</ecNumber>
    </recommendedName>
    <alternativeName>
        <fullName evidence="1">ABC phosphate transporter</fullName>
    </alternativeName>
    <alternativeName>
        <fullName evidence="1">Phosphate-transporting ATPase</fullName>
    </alternativeName>
</protein>
<keyword id="KW-0067">ATP-binding</keyword>
<keyword id="KW-0997">Cell inner membrane</keyword>
<keyword id="KW-1003">Cell membrane</keyword>
<keyword id="KW-0472">Membrane</keyword>
<keyword id="KW-0547">Nucleotide-binding</keyword>
<keyword id="KW-0592">Phosphate transport</keyword>
<keyword id="KW-1185">Reference proteome</keyword>
<keyword id="KW-1278">Translocase</keyword>
<keyword id="KW-0813">Transport</keyword>
<evidence type="ECO:0000255" key="1">
    <source>
        <dbReference type="HAMAP-Rule" id="MF_01702"/>
    </source>
</evidence>
<reference key="1">
    <citation type="journal article" date="2003" name="Proc. Natl. Acad. Sci. U.S.A.">
        <title>The complete genome sequence of Chromobacterium violaceum reveals remarkable and exploitable bacterial adaptability.</title>
        <authorList>
            <person name="Vasconcelos A.T.R."/>
            <person name="de Almeida D.F."/>
            <person name="Hungria M."/>
            <person name="Guimaraes C.T."/>
            <person name="Antonio R.V."/>
            <person name="Almeida F.C."/>
            <person name="de Almeida L.G.P."/>
            <person name="de Almeida R."/>
            <person name="Alves-Gomes J.A."/>
            <person name="Andrade E.M."/>
            <person name="Araripe J."/>
            <person name="de Araujo M.F.F."/>
            <person name="Astolfi-Filho S."/>
            <person name="Azevedo V."/>
            <person name="Baptista A.J."/>
            <person name="Bataus L.A.M."/>
            <person name="Batista J.S."/>
            <person name="Belo A."/>
            <person name="van den Berg C."/>
            <person name="Bogo M."/>
            <person name="Bonatto S."/>
            <person name="Bordignon J."/>
            <person name="Brigido M.M."/>
            <person name="Brito C.A."/>
            <person name="Brocchi M."/>
            <person name="Burity H.A."/>
            <person name="Camargo A.A."/>
            <person name="Cardoso D.D.P."/>
            <person name="Carneiro N.P."/>
            <person name="Carraro D.M."/>
            <person name="Carvalho C.M.B."/>
            <person name="Cascardo J.C.M."/>
            <person name="Cavada B.S."/>
            <person name="Chueire L.M.O."/>
            <person name="Creczynski-Pasa T.B."/>
            <person name="Cunha-Junior N.C."/>
            <person name="Fagundes N."/>
            <person name="Falcao C.L."/>
            <person name="Fantinatti F."/>
            <person name="Farias I.P."/>
            <person name="Felipe M.S.S."/>
            <person name="Ferrari L.P."/>
            <person name="Ferro J.A."/>
            <person name="Ferro M.I.T."/>
            <person name="Franco G.R."/>
            <person name="Freitas N.S.A."/>
            <person name="Furlan L.R."/>
            <person name="Gazzinelli R.T."/>
            <person name="Gomes E.A."/>
            <person name="Goncalves P.R."/>
            <person name="Grangeiro T.B."/>
            <person name="Grattapaglia D."/>
            <person name="Grisard E.C."/>
            <person name="Hanna E.S."/>
            <person name="Jardim S.N."/>
            <person name="Laurino J."/>
            <person name="Leoi L.C.T."/>
            <person name="Lima L.F.A."/>
            <person name="Loureiro M.F."/>
            <person name="Lyra M.C.C.P."/>
            <person name="Madeira H.M.F."/>
            <person name="Manfio G.P."/>
            <person name="Maranhao A.Q."/>
            <person name="Martins W.S."/>
            <person name="di Mauro S.M.Z."/>
            <person name="de Medeiros S.R.B."/>
            <person name="Meissner R.V."/>
            <person name="Moreira M.A.M."/>
            <person name="Nascimento F.F."/>
            <person name="Nicolas M.F."/>
            <person name="Oliveira J.G."/>
            <person name="Oliveira S.C."/>
            <person name="Paixao R.F.C."/>
            <person name="Parente J.A."/>
            <person name="Pedrosa F.O."/>
            <person name="Pena S.D.J."/>
            <person name="Pereira J.O."/>
            <person name="Pereira M."/>
            <person name="Pinto L.S.R.C."/>
            <person name="Pinto L.S."/>
            <person name="Porto J.I.R."/>
            <person name="Potrich D.P."/>
            <person name="Ramalho-Neto C.E."/>
            <person name="Reis A.M.M."/>
            <person name="Rigo L.U."/>
            <person name="Rondinelli E."/>
            <person name="Santos E.B.P."/>
            <person name="Santos F.R."/>
            <person name="Schneider M.P.C."/>
            <person name="Seuanez H.N."/>
            <person name="Silva A.M.R."/>
            <person name="da Silva A.L.C."/>
            <person name="Silva D.W."/>
            <person name="Silva R."/>
            <person name="Simoes I.C."/>
            <person name="Simon D."/>
            <person name="Soares C.M.A."/>
            <person name="Soares R.B.A."/>
            <person name="Souza E.M."/>
            <person name="Souza K.R.L."/>
            <person name="Souza R.C."/>
            <person name="Steffens M.B.R."/>
            <person name="Steindel M."/>
            <person name="Teixeira S.R."/>
            <person name="Urmenyi T."/>
            <person name="Vettore A."/>
            <person name="Wassem R."/>
            <person name="Zaha A."/>
            <person name="Simpson A.J.G."/>
        </authorList>
    </citation>
    <scope>NUCLEOTIDE SEQUENCE [LARGE SCALE GENOMIC DNA]</scope>
    <source>
        <strain>ATCC 12472 / DSM 30191 / JCM 1249 / CCUG 213 / NBRC 12614 / NCIMB 9131 / NCTC 9757 / MK</strain>
    </source>
</reference>
<gene>
    <name evidence="1" type="primary">pstB</name>
    <name type="ordered locus">CV_0935</name>
</gene>
<accession>Q7NZI7</accession>
<name>PSTB_CHRVO</name>
<dbReference type="EC" id="7.3.2.1" evidence="1"/>
<dbReference type="EMBL" id="AE016825">
    <property type="protein sequence ID" value="AAQ58609.1"/>
    <property type="molecule type" value="Genomic_DNA"/>
</dbReference>
<dbReference type="RefSeq" id="WP_011134490.1">
    <property type="nucleotide sequence ID" value="NC_005085.1"/>
</dbReference>
<dbReference type="SMR" id="Q7NZI7"/>
<dbReference type="STRING" id="243365.CV_0935"/>
<dbReference type="GeneID" id="66366624"/>
<dbReference type="KEGG" id="cvi:CV_0935"/>
<dbReference type="eggNOG" id="COG1117">
    <property type="taxonomic scope" value="Bacteria"/>
</dbReference>
<dbReference type="HOGENOM" id="CLU_000604_1_22_4"/>
<dbReference type="Proteomes" id="UP000001424">
    <property type="component" value="Chromosome"/>
</dbReference>
<dbReference type="GO" id="GO:0005886">
    <property type="term" value="C:plasma membrane"/>
    <property type="evidence" value="ECO:0007669"/>
    <property type="project" value="UniProtKB-SubCell"/>
</dbReference>
<dbReference type="GO" id="GO:0005524">
    <property type="term" value="F:ATP binding"/>
    <property type="evidence" value="ECO:0007669"/>
    <property type="project" value="UniProtKB-KW"/>
</dbReference>
<dbReference type="GO" id="GO:0016887">
    <property type="term" value="F:ATP hydrolysis activity"/>
    <property type="evidence" value="ECO:0007669"/>
    <property type="project" value="InterPro"/>
</dbReference>
<dbReference type="GO" id="GO:0015415">
    <property type="term" value="F:ATPase-coupled phosphate ion transmembrane transporter activity"/>
    <property type="evidence" value="ECO:0007669"/>
    <property type="project" value="UniProtKB-EC"/>
</dbReference>
<dbReference type="GO" id="GO:0035435">
    <property type="term" value="P:phosphate ion transmembrane transport"/>
    <property type="evidence" value="ECO:0007669"/>
    <property type="project" value="InterPro"/>
</dbReference>
<dbReference type="CDD" id="cd03260">
    <property type="entry name" value="ABC_PstB_phosphate_transporter"/>
    <property type="match status" value="1"/>
</dbReference>
<dbReference type="FunFam" id="3.40.50.300:FF:000132">
    <property type="entry name" value="Phosphate import ATP-binding protein PstB"/>
    <property type="match status" value="1"/>
</dbReference>
<dbReference type="Gene3D" id="3.40.50.300">
    <property type="entry name" value="P-loop containing nucleotide triphosphate hydrolases"/>
    <property type="match status" value="1"/>
</dbReference>
<dbReference type="InterPro" id="IPR003593">
    <property type="entry name" value="AAA+_ATPase"/>
</dbReference>
<dbReference type="InterPro" id="IPR003439">
    <property type="entry name" value="ABC_transporter-like_ATP-bd"/>
</dbReference>
<dbReference type="InterPro" id="IPR017871">
    <property type="entry name" value="ABC_transporter-like_CS"/>
</dbReference>
<dbReference type="InterPro" id="IPR027417">
    <property type="entry name" value="P-loop_NTPase"/>
</dbReference>
<dbReference type="InterPro" id="IPR005670">
    <property type="entry name" value="PstB-like"/>
</dbReference>
<dbReference type="NCBIfam" id="TIGR00972">
    <property type="entry name" value="3a0107s01c2"/>
    <property type="match status" value="1"/>
</dbReference>
<dbReference type="PANTHER" id="PTHR43423">
    <property type="entry name" value="ABC TRANSPORTER I FAMILY MEMBER 17"/>
    <property type="match status" value="1"/>
</dbReference>
<dbReference type="PANTHER" id="PTHR43423:SF3">
    <property type="entry name" value="PHOSPHATE IMPORT ATP-BINDING PROTEIN PSTB"/>
    <property type="match status" value="1"/>
</dbReference>
<dbReference type="Pfam" id="PF00005">
    <property type="entry name" value="ABC_tran"/>
    <property type="match status" value="1"/>
</dbReference>
<dbReference type="SMART" id="SM00382">
    <property type="entry name" value="AAA"/>
    <property type="match status" value="1"/>
</dbReference>
<dbReference type="SUPFAM" id="SSF52540">
    <property type="entry name" value="P-loop containing nucleoside triphosphate hydrolases"/>
    <property type="match status" value="1"/>
</dbReference>
<dbReference type="PROSITE" id="PS00211">
    <property type="entry name" value="ABC_TRANSPORTER_1"/>
    <property type="match status" value="1"/>
</dbReference>
<dbReference type="PROSITE" id="PS50893">
    <property type="entry name" value="ABC_TRANSPORTER_2"/>
    <property type="match status" value="1"/>
</dbReference>
<dbReference type="PROSITE" id="PS51238">
    <property type="entry name" value="PSTB"/>
    <property type="match status" value="1"/>
</dbReference>